<protein>
    <recommendedName>
        <fullName evidence="1">NADH-quinone oxidoreductase subunit H</fullName>
        <ecNumber evidence="1">7.1.1.-</ecNumber>
    </recommendedName>
    <alternativeName>
        <fullName evidence="1">NADH dehydrogenase I subunit H</fullName>
    </alternativeName>
    <alternativeName>
        <fullName evidence="1">NDH-1 subunit H</fullName>
    </alternativeName>
</protein>
<comment type="function">
    <text evidence="1">NDH-1 shuttles electrons from NADH, via FMN and iron-sulfur (Fe-S) centers, to quinones in the respiratory chain. The immediate electron acceptor for the enzyme in this species is believed to be ubiquinone. Couples the redox reaction to proton translocation (for every two electrons transferred, four hydrogen ions are translocated across the cytoplasmic membrane), and thus conserves the redox energy in a proton gradient. This subunit may bind ubiquinone.</text>
</comment>
<comment type="catalytic activity">
    <reaction evidence="1">
        <text>a quinone + NADH + 5 H(+)(in) = a quinol + NAD(+) + 4 H(+)(out)</text>
        <dbReference type="Rhea" id="RHEA:57888"/>
        <dbReference type="ChEBI" id="CHEBI:15378"/>
        <dbReference type="ChEBI" id="CHEBI:24646"/>
        <dbReference type="ChEBI" id="CHEBI:57540"/>
        <dbReference type="ChEBI" id="CHEBI:57945"/>
        <dbReference type="ChEBI" id="CHEBI:132124"/>
    </reaction>
</comment>
<comment type="subunit">
    <text evidence="1">NDH-1 is composed of 13 different subunits. Subunits NuoA, H, J, K, L, M, N constitute the membrane sector of the complex.</text>
</comment>
<comment type="subcellular location">
    <subcellularLocation>
        <location evidence="1">Cell inner membrane</location>
        <topology evidence="1">Multi-pass membrane protein</topology>
    </subcellularLocation>
</comment>
<comment type="similarity">
    <text evidence="1">Belongs to the complex I subunit 1 family.</text>
</comment>
<gene>
    <name evidence="1" type="primary">nuoH</name>
    <name type="ordered locus">ECA3022</name>
</gene>
<name>NUOH_PECAS</name>
<sequence length="324" mass="35940">MSWLTPELIEILITVGKAVVILLVVVTCGAFMSMGERRLLGLFQGRYGPNRVGWGGSLQLVADMIKMFFKEDWVPNFTDKVIFTLAPMIAFTSMLIAFAIVPITPTWGVADLNIGILFFLMMAGLAVYAVLFAGWASNNKYSLLGAVRASAQTVSYEVFIGLSLMGVVAQAGSFNMRDIVDSQEHLWNVIPQFFGFITFAIAGVAVCHRHPFDQPEAEQELADGYHIEYSGMKFGLFFVGEYIGIVTVSALMVTLFFGGWHGPFLPPFVWFALKTGFFMMMFILIRASLPRPRYDQVMAFGWKVCLPITLLNLLATAAVILYNA</sequence>
<keyword id="KW-0997">Cell inner membrane</keyword>
<keyword id="KW-1003">Cell membrane</keyword>
<keyword id="KW-0472">Membrane</keyword>
<keyword id="KW-0520">NAD</keyword>
<keyword id="KW-0874">Quinone</keyword>
<keyword id="KW-1185">Reference proteome</keyword>
<keyword id="KW-1278">Translocase</keyword>
<keyword id="KW-0812">Transmembrane</keyword>
<keyword id="KW-1133">Transmembrane helix</keyword>
<keyword id="KW-0830">Ubiquinone</keyword>
<evidence type="ECO:0000255" key="1">
    <source>
        <dbReference type="HAMAP-Rule" id="MF_01350"/>
    </source>
</evidence>
<accession>Q6D2S3</accession>
<reference key="1">
    <citation type="journal article" date="2004" name="Proc. Natl. Acad. Sci. U.S.A.">
        <title>Genome sequence of the enterobacterial phytopathogen Erwinia carotovora subsp. atroseptica and characterization of virulence factors.</title>
        <authorList>
            <person name="Bell K.S."/>
            <person name="Sebaihia M."/>
            <person name="Pritchard L."/>
            <person name="Holden M.T.G."/>
            <person name="Hyman L.J."/>
            <person name="Holeva M.C."/>
            <person name="Thomson N.R."/>
            <person name="Bentley S.D."/>
            <person name="Churcher L.J.C."/>
            <person name="Mungall K."/>
            <person name="Atkin R."/>
            <person name="Bason N."/>
            <person name="Brooks K."/>
            <person name="Chillingworth T."/>
            <person name="Clark K."/>
            <person name="Doggett J."/>
            <person name="Fraser A."/>
            <person name="Hance Z."/>
            <person name="Hauser H."/>
            <person name="Jagels K."/>
            <person name="Moule S."/>
            <person name="Norbertczak H."/>
            <person name="Ormond D."/>
            <person name="Price C."/>
            <person name="Quail M.A."/>
            <person name="Sanders M."/>
            <person name="Walker D."/>
            <person name="Whitehead S."/>
            <person name="Salmond G.P.C."/>
            <person name="Birch P.R.J."/>
            <person name="Parkhill J."/>
            <person name="Toth I.K."/>
        </authorList>
    </citation>
    <scope>NUCLEOTIDE SEQUENCE [LARGE SCALE GENOMIC DNA]</scope>
    <source>
        <strain>SCRI 1043 / ATCC BAA-672</strain>
    </source>
</reference>
<organism>
    <name type="scientific">Pectobacterium atrosepticum (strain SCRI 1043 / ATCC BAA-672)</name>
    <name type="common">Erwinia carotovora subsp. atroseptica</name>
    <dbReference type="NCBI Taxonomy" id="218491"/>
    <lineage>
        <taxon>Bacteria</taxon>
        <taxon>Pseudomonadati</taxon>
        <taxon>Pseudomonadota</taxon>
        <taxon>Gammaproteobacteria</taxon>
        <taxon>Enterobacterales</taxon>
        <taxon>Pectobacteriaceae</taxon>
        <taxon>Pectobacterium</taxon>
    </lineage>
</organism>
<dbReference type="EC" id="7.1.1.-" evidence="1"/>
<dbReference type="EMBL" id="BX950851">
    <property type="protein sequence ID" value="CAG75921.1"/>
    <property type="molecule type" value="Genomic_DNA"/>
</dbReference>
<dbReference type="RefSeq" id="WP_011094550.1">
    <property type="nucleotide sequence ID" value="NC_004547.2"/>
</dbReference>
<dbReference type="SMR" id="Q6D2S3"/>
<dbReference type="STRING" id="218491.ECA3022"/>
<dbReference type="GeneID" id="57209709"/>
<dbReference type="KEGG" id="eca:ECA3022"/>
<dbReference type="eggNOG" id="COG1005">
    <property type="taxonomic scope" value="Bacteria"/>
</dbReference>
<dbReference type="HOGENOM" id="CLU_015134_0_1_6"/>
<dbReference type="OrthoDB" id="9803734at2"/>
<dbReference type="Proteomes" id="UP000007966">
    <property type="component" value="Chromosome"/>
</dbReference>
<dbReference type="GO" id="GO:0005886">
    <property type="term" value="C:plasma membrane"/>
    <property type="evidence" value="ECO:0007669"/>
    <property type="project" value="UniProtKB-SubCell"/>
</dbReference>
<dbReference type="GO" id="GO:0003954">
    <property type="term" value="F:NADH dehydrogenase activity"/>
    <property type="evidence" value="ECO:0007669"/>
    <property type="project" value="TreeGrafter"/>
</dbReference>
<dbReference type="GO" id="GO:0016655">
    <property type="term" value="F:oxidoreductase activity, acting on NAD(P)H, quinone or similar compound as acceptor"/>
    <property type="evidence" value="ECO:0007669"/>
    <property type="project" value="UniProtKB-UniRule"/>
</dbReference>
<dbReference type="GO" id="GO:0048038">
    <property type="term" value="F:quinone binding"/>
    <property type="evidence" value="ECO:0007669"/>
    <property type="project" value="UniProtKB-KW"/>
</dbReference>
<dbReference type="GO" id="GO:0009060">
    <property type="term" value="P:aerobic respiration"/>
    <property type="evidence" value="ECO:0007669"/>
    <property type="project" value="TreeGrafter"/>
</dbReference>
<dbReference type="HAMAP" id="MF_01350">
    <property type="entry name" value="NDH1_NuoH"/>
    <property type="match status" value="1"/>
</dbReference>
<dbReference type="InterPro" id="IPR001694">
    <property type="entry name" value="NADH_UbQ_OxRdtase_su1/FPO"/>
</dbReference>
<dbReference type="InterPro" id="IPR018086">
    <property type="entry name" value="NADH_UbQ_OxRdtase_su1_CS"/>
</dbReference>
<dbReference type="NCBIfam" id="NF004740">
    <property type="entry name" value="PRK06076.1-1"/>
    <property type="match status" value="1"/>
</dbReference>
<dbReference type="NCBIfam" id="NF004741">
    <property type="entry name" value="PRK06076.1-2"/>
    <property type="match status" value="1"/>
</dbReference>
<dbReference type="PANTHER" id="PTHR11432">
    <property type="entry name" value="NADH DEHYDROGENASE SUBUNIT 1"/>
    <property type="match status" value="1"/>
</dbReference>
<dbReference type="PANTHER" id="PTHR11432:SF3">
    <property type="entry name" value="NADH-UBIQUINONE OXIDOREDUCTASE CHAIN 1"/>
    <property type="match status" value="1"/>
</dbReference>
<dbReference type="Pfam" id="PF00146">
    <property type="entry name" value="NADHdh"/>
    <property type="match status" value="1"/>
</dbReference>
<dbReference type="PROSITE" id="PS00667">
    <property type="entry name" value="COMPLEX1_ND1_1"/>
    <property type="match status" value="1"/>
</dbReference>
<dbReference type="PROSITE" id="PS00668">
    <property type="entry name" value="COMPLEX1_ND1_2"/>
    <property type="match status" value="1"/>
</dbReference>
<proteinExistence type="inferred from homology"/>
<feature type="chain" id="PRO_0000244917" description="NADH-quinone oxidoreductase subunit H">
    <location>
        <begin position="1"/>
        <end position="324"/>
    </location>
</feature>
<feature type="transmembrane region" description="Helical" evidence="1">
    <location>
        <begin position="11"/>
        <end position="31"/>
    </location>
</feature>
<feature type="transmembrane region" description="Helical" evidence="1">
    <location>
        <begin position="81"/>
        <end position="101"/>
    </location>
</feature>
<feature type="transmembrane region" description="Helical" evidence="1">
    <location>
        <begin position="114"/>
        <end position="134"/>
    </location>
</feature>
<feature type="transmembrane region" description="Helical" evidence="1">
    <location>
        <begin position="154"/>
        <end position="174"/>
    </location>
</feature>
<feature type="transmembrane region" description="Helical" evidence="1">
    <location>
        <begin position="186"/>
        <end position="206"/>
    </location>
</feature>
<feature type="transmembrane region" description="Helical" evidence="1">
    <location>
        <begin position="237"/>
        <end position="257"/>
    </location>
</feature>
<feature type="transmembrane region" description="Helical" evidence="1">
    <location>
        <begin position="265"/>
        <end position="285"/>
    </location>
</feature>
<feature type="transmembrane region" description="Helical" evidence="1">
    <location>
        <begin position="304"/>
        <end position="324"/>
    </location>
</feature>